<sequence>MPPKSRQGAGRKVRRKEKKNVVHGHAHIKSTFNNTIVSITDPTGAVISWASAGQVGFKGSRKSTPFAAQMAAEAAARRAQEHGVRKVDVFVKGPGSGRETAIRSLQATGLEVGSIQDVTPVPHNGCRPPKRRRV</sequence>
<evidence type="ECO:0000255" key="1">
    <source>
        <dbReference type="HAMAP-Rule" id="MF_01310"/>
    </source>
</evidence>
<evidence type="ECO:0000256" key="2">
    <source>
        <dbReference type="SAM" id="MobiDB-lite"/>
    </source>
</evidence>
<evidence type="ECO:0000305" key="3"/>
<dbReference type="EMBL" id="CP000088">
    <property type="protein sequence ID" value="AAZ56652.1"/>
    <property type="molecule type" value="Genomic_DNA"/>
</dbReference>
<dbReference type="RefSeq" id="WP_011293042.1">
    <property type="nucleotide sequence ID" value="NC_007333.1"/>
</dbReference>
<dbReference type="SMR" id="Q47LM0"/>
<dbReference type="STRING" id="269800.Tfu_2619"/>
<dbReference type="KEGG" id="tfu:Tfu_2619"/>
<dbReference type="eggNOG" id="COG0100">
    <property type="taxonomic scope" value="Bacteria"/>
</dbReference>
<dbReference type="HOGENOM" id="CLU_072439_5_0_11"/>
<dbReference type="OrthoDB" id="9806415at2"/>
<dbReference type="GO" id="GO:1990904">
    <property type="term" value="C:ribonucleoprotein complex"/>
    <property type="evidence" value="ECO:0007669"/>
    <property type="project" value="UniProtKB-KW"/>
</dbReference>
<dbReference type="GO" id="GO:0005840">
    <property type="term" value="C:ribosome"/>
    <property type="evidence" value="ECO:0007669"/>
    <property type="project" value="UniProtKB-KW"/>
</dbReference>
<dbReference type="GO" id="GO:0019843">
    <property type="term" value="F:rRNA binding"/>
    <property type="evidence" value="ECO:0007669"/>
    <property type="project" value="UniProtKB-UniRule"/>
</dbReference>
<dbReference type="GO" id="GO:0003735">
    <property type="term" value="F:structural constituent of ribosome"/>
    <property type="evidence" value="ECO:0007669"/>
    <property type="project" value="InterPro"/>
</dbReference>
<dbReference type="GO" id="GO:0006412">
    <property type="term" value="P:translation"/>
    <property type="evidence" value="ECO:0007669"/>
    <property type="project" value="UniProtKB-UniRule"/>
</dbReference>
<dbReference type="FunFam" id="3.30.420.80:FF:000001">
    <property type="entry name" value="30S ribosomal protein S11"/>
    <property type="match status" value="1"/>
</dbReference>
<dbReference type="Gene3D" id="3.30.420.80">
    <property type="entry name" value="Ribosomal protein S11"/>
    <property type="match status" value="1"/>
</dbReference>
<dbReference type="HAMAP" id="MF_01310">
    <property type="entry name" value="Ribosomal_uS11"/>
    <property type="match status" value="1"/>
</dbReference>
<dbReference type="InterPro" id="IPR001971">
    <property type="entry name" value="Ribosomal_uS11"/>
</dbReference>
<dbReference type="InterPro" id="IPR019981">
    <property type="entry name" value="Ribosomal_uS11_bac-type"/>
</dbReference>
<dbReference type="InterPro" id="IPR018102">
    <property type="entry name" value="Ribosomal_uS11_CS"/>
</dbReference>
<dbReference type="InterPro" id="IPR036967">
    <property type="entry name" value="Ribosomal_uS11_sf"/>
</dbReference>
<dbReference type="NCBIfam" id="NF003698">
    <property type="entry name" value="PRK05309.1"/>
    <property type="match status" value="1"/>
</dbReference>
<dbReference type="NCBIfam" id="TIGR03632">
    <property type="entry name" value="uS11_bact"/>
    <property type="match status" value="1"/>
</dbReference>
<dbReference type="PANTHER" id="PTHR11759">
    <property type="entry name" value="40S RIBOSOMAL PROTEIN S14/30S RIBOSOMAL PROTEIN S11"/>
    <property type="match status" value="1"/>
</dbReference>
<dbReference type="Pfam" id="PF00411">
    <property type="entry name" value="Ribosomal_S11"/>
    <property type="match status" value="1"/>
</dbReference>
<dbReference type="PIRSF" id="PIRSF002131">
    <property type="entry name" value="Ribosomal_S11"/>
    <property type="match status" value="1"/>
</dbReference>
<dbReference type="SUPFAM" id="SSF53137">
    <property type="entry name" value="Translational machinery components"/>
    <property type="match status" value="1"/>
</dbReference>
<dbReference type="PROSITE" id="PS00054">
    <property type="entry name" value="RIBOSOMAL_S11"/>
    <property type="match status" value="1"/>
</dbReference>
<comment type="function">
    <text evidence="1">Located on the platform of the 30S subunit, it bridges several disparate RNA helices of the 16S rRNA. Forms part of the Shine-Dalgarno cleft in the 70S ribosome.</text>
</comment>
<comment type="subunit">
    <text evidence="1">Part of the 30S ribosomal subunit. Interacts with proteins S7 and S18. Binds to IF-3.</text>
</comment>
<comment type="similarity">
    <text evidence="1">Belongs to the universal ribosomal protein uS11 family.</text>
</comment>
<accession>Q47LM0</accession>
<feature type="chain" id="PRO_0000230437" description="Small ribosomal subunit protein uS11">
    <location>
        <begin position="1"/>
        <end position="134"/>
    </location>
</feature>
<feature type="region of interest" description="Disordered" evidence="2">
    <location>
        <begin position="1"/>
        <end position="21"/>
    </location>
</feature>
<feature type="compositionally biased region" description="Basic residues" evidence="2">
    <location>
        <begin position="9"/>
        <end position="21"/>
    </location>
</feature>
<name>RS11_THEFY</name>
<protein>
    <recommendedName>
        <fullName evidence="1">Small ribosomal subunit protein uS11</fullName>
    </recommendedName>
    <alternativeName>
        <fullName evidence="3">30S ribosomal protein S11</fullName>
    </alternativeName>
</protein>
<organism>
    <name type="scientific">Thermobifida fusca (strain YX)</name>
    <dbReference type="NCBI Taxonomy" id="269800"/>
    <lineage>
        <taxon>Bacteria</taxon>
        <taxon>Bacillati</taxon>
        <taxon>Actinomycetota</taxon>
        <taxon>Actinomycetes</taxon>
        <taxon>Streptosporangiales</taxon>
        <taxon>Nocardiopsidaceae</taxon>
        <taxon>Thermobifida</taxon>
    </lineage>
</organism>
<keyword id="KW-0687">Ribonucleoprotein</keyword>
<keyword id="KW-0689">Ribosomal protein</keyword>
<keyword id="KW-0694">RNA-binding</keyword>
<keyword id="KW-0699">rRNA-binding</keyword>
<proteinExistence type="inferred from homology"/>
<gene>
    <name evidence="1" type="primary">rpsK</name>
    <name type="ordered locus">Tfu_2619</name>
</gene>
<reference key="1">
    <citation type="journal article" date="2007" name="J. Bacteriol.">
        <title>Genome sequence and analysis of the soil cellulolytic actinomycete Thermobifida fusca YX.</title>
        <authorList>
            <person name="Lykidis A."/>
            <person name="Mavromatis K."/>
            <person name="Ivanova N."/>
            <person name="Anderson I."/>
            <person name="Land M."/>
            <person name="DiBartolo G."/>
            <person name="Martinez M."/>
            <person name="Lapidus A."/>
            <person name="Lucas S."/>
            <person name="Copeland A."/>
            <person name="Richardson P."/>
            <person name="Wilson D.B."/>
            <person name="Kyrpides N."/>
        </authorList>
    </citation>
    <scope>NUCLEOTIDE SEQUENCE [LARGE SCALE GENOMIC DNA]</scope>
    <source>
        <strain>YX</strain>
    </source>
</reference>